<sequence length="469" mass="53248">MVISESMDILFRIRGGLDLAFQLATPNEIFLKKALKHVLSDLSTKLSSNALVFRICHSSVYIWPSSDINTIPGELTDASACKNILRFIQFEPEEDIKRKFMRKKDKKLSDMHQIVNIDLMLEMSTSLAAVTPIVERESGGHHYVNMTLPVDAVISVAPEETWGKVRKLLVDAIHNQLTDMEKCILKYMKGTSIVVPEPLHFLLPGKKNLVTISYPSGIPDGQLQAYREELHDLFNLPHDRPYFKRSNAYHFPDEPYKDGYIRNPHTYLNPPNMETGMIYVVQGIYGYHHYMQDRIDDNGWGCAYRSLQTICSWFKHQGYTERSIPTHREIQQALVDAGDKPATFVGSRQWIGSIEVQLVLNQLIGITSKILFVSQGSEIASQGRELANHFQSEGTPVMIGGGVLAHTILGVAWNEITGQIKFLILDPHYTGAEDLQVILEKGWCGWKGPDFWNKDAYYNLCLPQRPNMI</sequence>
<organism>
    <name type="scientific">Pongo abelii</name>
    <name type="common">Sumatran orangutan</name>
    <name type="synonym">Pongo pygmaeus abelii</name>
    <dbReference type="NCBI Taxonomy" id="9601"/>
    <lineage>
        <taxon>Eukaryota</taxon>
        <taxon>Metazoa</taxon>
        <taxon>Chordata</taxon>
        <taxon>Craniata</taxon>
        <taxon>Vertebrata</taxon>
        <taxon>Euteleostomi</taxon>
        <taxon>Mammalia</taxon>
        <taxon>Eutheria</taxon>
        <taxon>Euarchontoglires</taxon>
        <taxon>Primates</taxon>
        <taxon>Haplorrhini</taxon>
        <taxon>Catarrhini</taxon>
        <taxon>Hominidae</taxon>
        <taxon>Pongo</taxon>
    </lineage>
</organism>
<protein>
    <recommendedName>
        <fullName evidence="2">Ufm1-specific protease 2</fullName>
        <shortName evidence="2">UfSP2</shortName>
        <ecNumber evidence="2">3.4.22.-</ecNumber>
    </recommendedName>
</protein>
<proteinExistence type="evidence at transcript level"/>
<reference key="1">
    <citation type="submission" date="2004-11" db="EMBL/GenBank/DDBJ databases">
        <authorList>
            <consortium name="The German cDNA consortium"/>
        </authorList>
    </citation>
    <scope>NUCLEOTIDE SEQUENCE [LARGE SCALE MRNA]</scope>
    <source>
        <tissue>Kidney</tissue>
    </source>
</reference>
<evidence type="ECO:0000250" key="1">
    <source>
        <dbReference type="UniProtKB" id="Q99K23"/>
    </source>
</evidence>
<evidence type="ECO:0000250" key="2">
    <source>
        <dbReference type="UniProtKB" id="Q9NUQ7"/>
    </source>
</evidence>
<evidence type="ECO:0000305" key="3"/>
<gene>
    <name evidence="2" type="primary">UFSP2</name>
</gene>
<comment type="function">
    <text evidence="2">Thiol-dependent isopeptidase that specifically cleaves UFM1, a ubiquitin-like modifier protein, from conjugated proteins, such as CD274/PD-L1, CYB5R3, DDRGK1, MRE11, RPL26/uL24, TRIP4 and RPL26/uL24. While it is also able to mediate the processing of UFM1 precursors, a prerequisite for conjugation reactions, UFSP2 mainly acts as a protein deUFMylase that mediates deconjugation of UFM1 from target proteins. Mediates deUFMylation of RPL26/uL24, a critical step to release the UFM1 ribosome E3 ligase (UREL) complex during the recycling of 60S ribosome subunits from the endoplasmic reticulum. Catalyzes deUFMylation of TRIP4, regulating intracellular nuclear receptors transactivation and thereby regulate cell proliferation and differentiation.</text>
</comment>
<comment type="subcellular location">
    <subcellularLocation>
        <location evidence="1">Endoplasmic reticulum</location>
    </subcellularLocation>
    <subcellularLocation>
        <location evidence="1">Cytoplasm</location>
    </subcellularLocation>
    <subcellularLocation>
        <location evidence="1">Nucleus</location>
    </subcellularLocation>
</comment>
<comment type="similarity">
    <text evidence="3">Belongs to the peptidase C78 family.</text>
</comment>
<keyword id="KW-0007">Acetylation</keyword>
<keyword id="KW-0963">Cytoplasm</keyword>
<keyword id="KW-0256">Endoplasmic reticulum</keyword>
<keyword id="KW-0378">Hydrolase</keyword>
<keyword id="KW-0539">Nucleus</keyword>
<keyword id="KW-0645">Protease</keyword>
<keyword id="KW-1185">Reference proteome</keyword>
<keyword id="KW-0788">Thiol protease</keyword>
<keyword id="KW-0833">Ubl conjugation pathway</keyword>
<accession>Q5RCS9</accession>
<name>UFSP2_PONAB</name>
<feature type="chain" id="PRO_0000280364" description="Ufm1-specific protease 2">
    <location>
        <begin position="1"/>
        <end position="469"/>
    </location>
</feature>
<feature type="active site" evidence="1">
    <location>
        <position position="302"/>
    </location>
</feature>
<feature type="active site" evidence="1">
    <location>
        <position position="426"/>
    </location>
</feature>
<feature type="active site" evidence="1">
    <location>
        <position position="428"/>
    </location>
</feature>
<feature type="modified residue" description="N-acetylmethionine" evidence="2">
    <location>
        <position position="1"/>
    </location>
</feature>
<dbReference type="EC" id="3.4.22.-" evidence="2"/>
<dbReference type="EMBL" id="CR858189">
    <property type="protein sequence ID" value="CAH90428.1"/>
    <property type="molecule type" value="mRNA"/>
</dbReference>
<dbReference type="RefSeq" id="NP_001125214.1">
    <property type="nucleotide sequence ID" value="NM_001131742.1"/>
</dbReference>
<dbReference type="SMR" id="Q5RCS9"/>
<dbReference type="FunCoup" id="Q5RCS9">
    <property type="interactions" value="2566"/>
</dbReference>
<dbReference type="STRING" id="9601.ENSPPYP00000017034"/>
<dbReference type="MEROPS" id="C78.002"/>
<dbReference type="GeneID" id="100172106"/>
<dbReference type="KEGG" id="pon:100172106"/>
<dbReference type="CTD" id="55325"/>
<dbReference type="eggNOG" id="KOG2433">
    <property type="taxonomic scope" value="Eukaryota"/>
</dbReference>
<dbReference type="InParanoid" id="Q5RCS9"/>
<dbReference type="OrthoDB" id="417506at2759"/>
<dbReference type="Proteomes" id="UP000001595">
    <property type="component" value="Unplaced"/>
</dbReference>
<dbReference type="GO" id="GO:0005737">
    <property type="term" value="C:cytoplasm"/>
    <property type="evidence" value="ECO:0000250"/>
    <property type="project" value="UniProtKB"/>
</dbReference>
<dbReference type="GO" id="GO:0005783">
    <property type="term" value="C:endoplasmic reticulum"/>
    <property type="evidence" value="ECO:0000250"/>
    <property type="project" value="UniProtKB"/>
</dbReference>
<dbReference type="GO" id="GO:0005634">
    <property type="term" value="C:nucleus"/>
    <property type="evidence" value="ECO:0000250"/>
    <property type="project" value="UniProtKB"/>
</dbReference>
<dbReference type="GO" id="GO:0071567">
    <property type="term" value="F:deUFMylase activity"/>
    <property type="evidence" value="ECO:0000250"/>
    <property type="project" value="UniProtKB"/>
</dbReference>
<dbReference type="GO" id="GO:0006508">
    <property type="term" value="P:proteolysis"/>
    <property type="evidence" value="ECO:0000250"/>
    <property type="project" value="UniProtKB"/>
</dbReference>
<dbReference type="GO" id="GO:0033146">
    <property type="term" value="P:regulation of intracellular estrogen receptor signaling pathway"/>
    <property type="evidence" value="ECO:0000250"/>
    <property type="project" value="UniProtKB"/>
</dbReference>
<dbReference type="GO" id="GO:0032790">
    <property type="term" value="P:ribosome disassembly"/>
    <property type="evidence" value="ECO:0000250"/>
    <property type="project" value="UniProtKB"/>
</dbReference>
<dbReference type="FunFam" id="3.90.70.130:FF:000001">
    <property type="entry name" value="Probable Ufm1-specific protease 2"/>
    <property type="match status" value="1"/>
</dbReference>
<dbReference type="Gene3D" id="3.90.70.130">
    <property type="match status" value="1"/>
</dbReference>
<dbReference type="InterPro" id="IPR012462">
    <property type="entry name" value="UfSP1/2_DUB_cat"/>
</dbReference>
<dbReference type="InterPro" id="IPR049387">
    <property type="entry name" value="UfSP2-like_N"/>
</dbReference>
<dbReference type="PANTHER" id="PTHR48153">
    <property type="entry name" value="UFM1-SPECIFIC PROTEASE 2"/>
    <property type="match status" value="1"/>
</dbReference>
<dbReference type="PANTHER" id="PTHR48153:SF2">
    <property type="entry name" value="UFM1-SPECIFIC PROTEASE 2"/>
    <property type="match status" value="1"/>
</dbReference>
<dbReference type="Pfam" id="PF07910">
    <property type="entry name" value="Peptidase_C78"/>
    <property type="match status" value="1"/>
</dbReference>
<dbReference type="Pfam" id="PF20908">
    <property type="entry name" value="UfSP2_N"/>
    <property type="match status" value="1"/>
</dbReference>